<feature type="chain" id="PRO_0000329372" description="Adenine phosphoribosyltransferase">
    <location>
        <begin position="1"/>
        <end position="188"/>
    </location>
</feature>
<reference key="1">
    <citation type="submission" date="2007-10" db="EMBL/GenBank/DDBJ databases">
        <title>Complete sequence of Salinispora arenicola CNS-205.</title>
        <authorList>
            <consortium name="US DOE Joint Genome Institute"/>
            <person name="Copeland A."/>
            <person name="Lucas S."/>
            <person name="Lapidus A."/>
            <person name="Barry K."/>
            <person name="Glavina del Rio T."/>
            <person name="Dalin E."/>
            <person name="Tice H."/>
            <person name="Pitluck S."/>
            <person name="Foster B."/>
            <person name="Schmutz J."/>
            <person name="Larimer F."/>
            <person name="Land M."/>
            <person name="Hauser L."/>
            <person name="Kyrpides N."/>
            <person name="Ivanova N."/>
            <person name="Jensen P.R."/>
            <person name="Moore B.S."/>
            <person name="Penn K."/>
            <person name="Jenkins C."/>
            <person name="Udwary D."/>
            <person name="Xiang L."/>
            <person name="Gontang E."/>
            <person name="Richardson P."/>
        </authorList>
    </citation>
    <scope>NUCLEOTIDE SEQUENCE [LARGE SCALE GENOMIC DNA]</scope>
    <source>
        <strain>CNS-205</strain>
    </source>
</reference>
<accession>A8LXX3</accession>
<dbReference type="EC" id="2.4.2.7" evidence="1"/>
<dbReference type="EMBL" id="CP000850">
    <property type="protein sequence ID" value="ABV97690.1"/>
    <property type="molecule type" value="Genomic_DNA"/>
</dbReference>
<dbReference type="SMR" id="A8LXX3"/>
<dbReference type="STRING" id="391037.Sare_1804"/>
<dbReference type="KEGG" id="saq:Sare_1804"/>
<dbReference type="PATRIC" id="fig|391037.6.peg.1835"/>
<dbReference type="eggNOG" id="COG0503">
    <property type="taxonomic scope" value="Bacteria"/>
</dbReference>
<dbReference type="HOGENOM" id="CLU_063339_3_3_11"/>
<dbReference type="OrthoDB" id="9803963at2"/>
<dbReference type="UniPathway" id="UPA00588">
    <property type="reaction ID" value="UER00646"/>
</dbReference>
<dbReference type="GO" id="GO:0005737">
    <property type="term" value="C:cytoplasm"/>
    <property type="evidence" value="ECO:0007669"/>
    <property type="project" value="UniProtKB-SubCell"/>
</dbReference>
<dbReference type="GO" id="GO:0002055">
    <property type="term" value="F:adenine binding"/>
    <property type="evidence" value="ECO:0007669"/>
    <property type="project" value="TreeGrafter"/>
</dbReference>
<dbReference type="GO" id="GO:0003999">
    <property type="term" value="F:adenine phosphoribosyltransferase activity"/>
    <property type="evidence" value="ECO:0007669"/>
    <property type="project" value="UniProtKB-UniRule"/>
</dbReference>
<dbReference type="GO" id="GO:0016208">
    <property type="term" value="F:AMP binding"/>
    <property type="evidence" value="ECO:0007669"/>
    <property type="project" value="TreeGrafter"/>
</dbReference>
<dbReference type="GO" id="GO:0006168">
    <property type="term" value="P:adenine salvage"/>
    <property type="evidence" value="ECO:0007669"/>
    <property type="project" value="InterPro"/>
</dbReference>
<dbReference type="GO" id="GO:0044209">
    <property type="term" value="P:AMP salvage"/>
    <property type="evidence" value="ECO:0007669"/>
    <property type="project" value="UniProtKB-UniRule"/>
</dbReference>
<dbReference type="GO" id="GO:0006166">
    <property type="term" value="P:purine ribonucleoside salvage"/>
    <property type="evidence" value="ECO:0007669"/>
    <property type="project" value="UniProtKB-KW"/>
</dbReference>
<dbReference type="CDD" id="cd06223">
    <property type="entry name" value="PRTases_typeI"/>
    <property type="match status" value="1"/>
</dbReference>
<dbReference type="FunFam" id="3.40.50.2020:FF:000021">
    <property type="entry name" value="Adenine phosphoribosyltransferase"/>
    <property type="match status" value="1"/>
</dbReference>
<dbReference type="Gene3D" id="3.40.50.2020">
    <property type="match status" value="1"/>
</dbReference>
<dbReference type="HAMAP" id="MF_00004">
    <property type="entry name" value="Aden_phosphoribosyltr"/>
    <property type="match status" value="1"/>
</dbReference>
<dbReference type="InterPro" id="IPR005764">
    <property type="entry name" value="Ade_phspho_trans"/>
</dbReference>
<dbReference type="InterPro" id="IPR000836">
    <property type="entry name" value="PRibTrfase_dom"/>
</dbReference>
<dbReference type="InterPro" id="IPR029057">
    <property type="entry name" value="PRTase-like"/>
</dbReference>
<dbReference type="InterPro" id="IPR050054">
    <property type="entry name" value="UPRTase/APRTase"/>
</dbReference>
<dbReference type="NCBIfam" id="TIGR01090">
    <property type="entry name" value="apt"/>
    <property type="match status" value="1"/>
</dbReference>
<dbReference type="NCBIfam" id="NF002634">
    <property type="entry name" value="PRK02304.1-3"/>
    <property type="match status" value="1"/>
</dbReference>
<dbReference type="NCBIfam" id="NF002636">
    <property type="entry name" value="PRK02304.1-5"/>
    <property type="match status" value="1"/>
</dbReference>
<dbReference type="PANTHER" id="PTHR32315">
    <property type="entry name" value="ADENINE PHOSPHORIBOSYLTRANSFERASE"/>
    <property type="match status" value="1"/>
</dbReference>
<dbReference type="PANTHER" id="PTHR32315:SF3">
    <property type="entry name" value="ADENINE PHOSPHORIBOSYLTRANSFERASE"/>
    <property type="match status" value="1"/>
</dbReference>
<dbReference type="Pfam" id="PF00156">
    <property type="entry name" value="Pribosyltran"/>
    <property type="match status" value="1"/>
</dbReference>
<dbReference type="SUPFAM" id="SSF53271">
    <property type="entry name" value="PRTase-like"/>
    <property type="match status" value="1"/>
</dbReference>
<dbReference type="PROSITE" id="PS00103">
    <property type="entry name" value="PUR_PYR_PR_TRANSFER"/>
    <property type="match status" value="1"/>
</dbReference>
<name>APT_SALAI</name>
<sequence>MTETHTTEVRGDSGRAVAERVASRVLDVPDFPKPGVMFKDLMPLFADGDTFREVIDGIVRHYGRDSFDAVVGIEARGFVVAAAIAYAAGVGVVPVRKAGKLPRVAYSASYALEYGEATLEVHQDAFTAGHRVLVVDDVLATGGTAQATLDLVERAGGTVAGFTVLLELGFLGGRERLAPRAVHALLTV</sequence>
<organism>
    <name type="scientific">Salinispora arenicola (strain CNS-205)</name>
    <dbReference type="NCBI Taxonomy" id="391037"/>
    <lineage>
        <taxon>Bacteria</taxon>
        <taxon>Bacillati</taxon>
        <taxon>Actinomycetota</taxon>
        <taxon>Actinomycetes</taxon>
        <taxon>Micromonosporales</taxon>
        <taxon>Micromonosporaceae</taxon>
        <taxon>Salinispora</taxon>
    </lineage>
</organism>
<comment type="function">
    <text evidence="1">Catalyzes a salvage reaction resulting in the formation of AMP, that is energically less costly than de novo synthesis.</text>
</comment>
<comment type="catalytic activity">
    <reaction evidence="1">
        <text>AMP + diphosphate = 5-phospho-alpha-D-ribose 1-diphosphate + adenine</text>
        <dbReference type="Rhea" id="RHEA:16609"/>
        <dbReference type="ChEBI" id="CHEBI:16708"/>
        <dbReference type="ChEBI" id="CHEBI:33019"/>
        <dbReference type="ChEBI" id="CHEBI:58017"/>
        <dbReference type="ChEBI" id="CHEBI:456215"/>
        <dbReference type="EC" id="2.4.2.7"/>
    </reaction>
</comment>
<comment type="pathway">
    <text evidence="1">Purine metabolism; AMP biosynthesis via salvage pathway; AMP from adenine: step 1/1.</text>
</comment>
<comment type="subunit">
    <text evidence="1">Homodimer.</text>
</comment>
<comment type="subcellular location">
    <subcellularLocation>
        <location evidence="1">Cytoplasm</location>
    </subcellularLocation>
</comment>
<comment type="similarity">
    <text evidence="1">Belongs to the purine/pyrimidine phosphoribosyltransferase family.</text>
</comment>
<gene>
    <name evidence="1" type="primary">apt</name>
    <name type="ordered locus">Sare_1804</name>
</gene>
<keyword id="KW-0963">Cytoplasm</keyword>
<keyword id="KW-0328">Glycosyltransferase</keyword>
<keyword id="KW-0660">Purine salvage</keyword>
<keyword id="KW-0808">Transferase</keyword>
<proteinExistence type="inferred from homology"/>
<evidence type="ECO:0000255" key="1">
    <source>
        <dbReference type="HAMAP-Rule" id="MF_00004"/>
    </source>
</evidence>
<protein>
    <recommendedName>
        <fullName evidence="1">Adenine phosphoribosyltransferase</fullName>
        <shortName evidence="1">APRT</shortName>
        <ecNumber evidence="1">2.4.2.7</ecNumber>
    </recommendedName>
</protein>